<proteinExistence type="inferred from homology"/>
<dbReference type="EC" id="2.5.1.19" evidence="1"/>
<dbReference type="EMBL" id="CP000133">
    <property type="protein sequence ID" value="ABC89695.1"/>
    <property type="molecule type" value="Genomic_DNA"/>
</dbReference>
<dbReference type="RefSeq" id="WP_011424232.1">
    <property type="nucleotide sequence ID" value="NC_007761.1"/>
</dbReference>
<dbReference type="SMR" id="Q2KBU1"/>
<dbReference type="KEGG" id="ret:RHE_CH00884"/>
<dbReference type="eggNOG" id="COG0128">
    <property type="taxonomic scope" value="Bacteria"/>
</dbReference>
<dbReference type="HOGENOM" id="CLU_024321_0_0_5"/>
<dbReference type="OrthoDB" id="9809920at2"/>
<dbReference type="UniPathway" id="UPA00053">
    <property type="reaction ID" value="UER00089"/>
</dbReference>
<dbReference type="Proteomes" id="UP000001936">
    <property type="component" value="Chromosome"/>
</dbReference>
<dbReference type="GO" id="GO:0005737">
    <property type="term" value="C:cytoplasm"/>
    <property type="evidence" value="ECO:0007669"/>
    <property type="project" value="UniProtKB-SubCell"/>
</dbReference>
<dbReference type="GO" id="GO:0003866">
    <property type="term" value="F:3-phosphoshikimate 1-carboxyvinyltransferase activity"/>
    <property type="evidence" value="ECO:0007669"/>
    <property type="project" value="UniProtKB-UniRule"/>
</dbReference>
<dbReference type="GO" id="GO:0008652">
    <property type="term" value="P:amino acid biosynthetic process"/>
    <property type="evidence" value="ECO:0007669"/>
    <property type="project" value="UniProtKB-KW"/>
</dbReference>
<dbReference type="GO" id="GO:0009073">
    <property type="term" value="P:aromatic amino acid family biosynthetic process"/>
    <property type="evidence" value="ECO:0007669"/>
    <property type="project" value="UniProtKB-KW"/>
</dbReference>
<dbReference type="GO" id="GO:0009423">
    <property type="term" value="P:chorismate biosynthetic process"/>
    <property type="evidence" value="ECO:0007669"/>
    <property type="project" value="UniProtKB-UniRule"/>
</dbReference>
<dbReference type="CDD" id="cd01556">
    <property type="entry name" value="EPSP_synthase"/>
    <property type="match status" value="1"/>
</dbReference>
<dbReference type="Gene3D" id="3.65.10.10">
    <property type="entry name" value="Enolpyruvate transferase domain"/>
    <property type="match status" value="3"/>
</dbReference>
<dbReference type="HAMAP" id="MF_00210">
    <property type="entry name" value="EPSP_synth"/>
    <property type="match status" value="1"/>
</dbReference>
<dbReference type="InterPro" id="IPR001986">
    <property type="entry name" value="Enolpyruvate_Tfrase_dom"/>
</dbReference>
<dbReference type="InterPro" id="IPR036968">
    <property type="entry name" value="Enolpyruvate_Tfrase_sf"/>
</dbReference>
<dbReference type="InterPro" id="IPR006264">
    <property type="entry name" value="EPSP_synthase"/>
</dbReference>
<dbReference type="InterPro" id="IPR023193">
    <property type="entry name" value="EPSP_synthase_CS"/>
</dbReference>
<dbReference type="InterPro" id="IPR013792">
    <property type="entry name" value="RNA3'P_cycl/enolpyr_Trfase_a/b"/>
</dbReference>
<dbReference type="NCBIfam" id="TIGR01356">
    <property type="entry name" value="aroA"/>
    <property type="match status" value="1"/>
</dbReference>
<dbReference type="PANTHER" id="PTHR21090">
    <property type="entry name" value="AROM/DEHYDROQUINATE SYNTHASE"/>
    <property type="match status" value="1"/>
</dbReference>
<dbReference type="PANTHER" id="PTHR21090:SF5">
    <property type="entry name" value="PENTAFUNCTIONAL AROM POLYPEPTIDE"/>
    <property type="match status" value="1"/>
</dbReference>
<dbReference type="Pfam" id="PF00275">
    <property type="entry name" value="EPSP_synthase"/>
    <property type="match status" value="1"/>
</dbReference>
<dbReference type="PIRSF" id="PIRSF000505">
    <property type="entry name" value="EPSPS"/>
    <property type="match status" value="1"/>
</dbReference>
<dbReference type="SUPFAM" id="SSF55205">
    <property type="entry name" value="EPT/RTPC-like"/>
    <property type="match status" value="1"/>
</dbReference>
<dbReference type="PROSITE" id="PS00104">
    <property type="entry name" value="EPSP_SYNTHASE_1"/>
    <property type="match status" value="1"/>
</dbReference>
<name>AROA_RHIEC</name>
<reference key="1">
    <citation type="journal article" date="2006" name="Proc. Natl. Acad. Sci. U.S.A.">
        <title>The partitioned Rhizobium etli genome: genetic and metabolic redundancy in seven interacting replicons.</title>
        <authorList>
            <person name="Gonzalez V."/>
            <person name="Santamaria R.I."/>
            <person name="Bustos P."/>
            <person name="Hernandez-Gonzalez I."/>
            <person name="Medrano-Soto A."/>
            <person name="Moreno-Hagelsieb G."/>
            <person name="Janga S.C."/>
            <person name="Ramirez M.A."/>
            <person name="Jimenez-Jacinto V."/>
            <person name="Collado-Vides J."/>
            <person name="Davila G."/>
        </authorList>
    </citation>
    <scope>NUCLEOTIDE SEQUENCE [LARGE SCALE GENOMIC DNA]</scope>
    <source>
        <strain>ATCC 51251 / DSM 11541 / JCM 21823 / NBRC 15573 / CFN 42</strain>
    </source>
</reference>
<evidence type="ECO:0000255" key="1">
    <source>
        <dbReference type="HAMAP-Rule" id="MF_00210"/>
    </source>
</evidence>
<feature type="chain" id="PRO_1000124700" description="3-phosphoshikimate 1-carboxyvinyltransferase">
    <location>
        <begin position="1"/>
        <end position="420"/>
    </location>
</feature>
<feature type="active site" description="Proton acceptor" evidence="1">
    <location>
        <position position="297"/>
    </location>
</feature>
<feature type="binding site" evidence="1">
    <location>
        <position position="26"/>
    </location>
    <ligand>
        <name>3-phosphoshikimate</name>
        <dbReference type="ChEBI" id="CHEBI:145989"/>
    </ligand>
</feature>
<feature type="binding site" evidence="1">
    <location>
        <position position="26"/>
    </location>
    <ligand>
        <name>phosphoenolpyruvate</name>
        <dbReference type="ChEBI" id="CHEBI:58702"/>
    </ligand>
</feature>
<feature type="binding site" evidence="1">
    <location>
        <position position="27"/>
    </location>
    <ligand>
        <name>3-phosphoshikimate</name>
        <dbReference type="ChEBI" id="CHEBI:145989"/>
    </ligand>
</feature>
<feature type="binding site" evidence="1">
    <location>
        <position position="31"/>
    </location>
    <ligand>
        <name>3-phosphoshikimate</name>
        <dbReference type="ChEBI" id="CHEBI:145989"/>
    </ligand>
</feature>
<feature type="binding site" evidence="1">
    <location>
        <position position="97"/>
    </location>
    <ligand>
        <name>phosphoenolpyruvate</name>
        <dbReference type="ChEBI" id="CHEBI:58702"/>
    </ligand>
</feature>
<feature type="binding site" evidence="1">
    <location>
        <position position="125"/>
    </location>
    <ligand>
        <name>phosphoenolpyruvate</name>
        <dbReference type="ChEBI" id="CHEBI:58702"/>
    </ligand>
</feature>
<feature type="binding site" evidence="1">
    <location>
        <position position="170"/>
    </location>
    <ligand>
        <name>3-phosphoshikimate</name>
        <dbReference type="ChEBI" id="CHEBI:145989"/>
    </ligand>
</feature>
<feature type="binding site" evidence="1">
    <location>
        <position position="171"/>
    </location>
    <ligand>
        <name>3-phosphoshikimate</name>
        <dbReference type="ChEBI" id="CHEBI:145989"/>
    </ligand>
</feature>
<feature type="binding site" evidence="1">
    <location>
        <position position="172"/>
    </location>
    <ligand>
        <name>3-phosphoshikimate</name>
        <dbReference type="ChEBI" id="CHEBI:145989"/>
    </ligand>
</feature>
<feature type="binding site" evidence="1">
    <location>
        <position position="172"/>
    </location>
    <ligand>
        <name>phosphoenolpyruvate</name>
        <dbReference type="ChEBI" id="CHEBI:58702"/>
    </ligand>
</feature>
<feature type="binding site" evidence="1">
    <location>
        <position position="297"/>
    </location>
    <ligand>
        <name>3-phosphoshikimate</name>
        <dbReference type="ChEBI" id="CHEBI:145989"/>
    </ligand>
</feature>
<feature type="binding site" evidence="1">
    <location>
        <position position="320"/>
    </location>
    <ligand>
        <name>3-phosphoshikimate</name>
        <dbReference type="ChEBI" id="CHEBI:145989"/>
    </ligand>
</feature>
<feature type="binding site" evidence="1">
    <location>
        <position position="324"/>
    </location>
    <ligand>
        <name>3-phosphoshikimate</name>
        <dbReference type="ChEBI" id="CHEBI:145989"/>
    </ligand>
</feature>
<feature type="binding site" evidence="1">
    <location>
        <position position="328"/>
    </location>
    <ligand>
        <name>phosphoenolpyruvate</name>
        <dbReference type="ChEBI" id="CHEBI:58702"/>
    </ligand>
</feature>
<feature type="binding site" evidence="1">
    <location>
        <position position="375"/>
    </location>
    <ligand>
        <name>phosphoenolpyruvate</name>
        <dbReference type="ChEBI" id="CHEBI:58702"/>
    </ligand>
</feature>
<feature type="binding site" evidence="1">
    <location>
        <position position="400"/>
    </location>
    <ligand>
        <name>phosphoenolpyruvate</name>
        <dbReference type="ChEBI" id="CHEBI:58702"/>
    </ligand>
</feature>
<protein>
    <recommendedName>
        <fullName evidence="1">3-phosphoshikimate 1-carboxyvinyltransferase</fullName>
        <ecNumber evidence="1">2.5.1.19</ecNumber>
    </recommendedName>
    <alternativeName>
        <fullName evidence="1">5-enolpyruvylshikimate-3-phosphate synthase</fullName>
        <shortName evidence="1">EPSP synthase</shortName>
        <shortName evidence="1">EPSPS</shortName>
    </alternativeName>
</protein>
<keyword id="KW-0028">Amino-acid biosynthesis</keyword>
<keyword id="KW-0057">Aromatic amino acid biosynthesis</keyword>
<keyword id="KW-0963">Cytoplasm</keyword>
<keyword id="KW-1185">Reference proteome</keyword>
<keyword id="KW-0808">Transferase</keyword>
<comment type="function">
    <text evidence="1">Catalyzes the transfer of the enolpyruvyl moiety of phosphoenolpyruvate (PEP) to the 5-hydroxyl of shikimate-3-phosphate (S3P) to produce enolpyruvyl shikimate-3-phosphate and inorganic phosphate.</text>
</comment>
<comment type="catalytic activity">
    <reaction evidence="1">
        <text>3-phosphoshikimate + phosphoenolpyruvate = 5-O-(1-carboxyvinyl)-3-phosphoshikimate + phosphate</text>
        <dbReference type="Rhea" id="RHEA:21256"/>
        <dbReference type="ChEBI" id="CHEBI:43474"/>
        <dbReference type="ChEBI" id="CHEBI:57701"/>
        <dbReference type="ChEBI" id="CHEBI:58702"/>
        <dbReference type="ChEBI" id="CHEBI:145989"/>
        <dbReference type="EC" id="2.5.1.19"/>
    </reaction>
    <physiologicalReaction direction="left-to-right" evidence="1">
        <dbReference type="Rhea" id="RHEA:21257"/>
    </physiologicalReaction>
</comment>
<comment type="pathway">
    <text evidence="1">Metabolic intermediate biosynthesis; chorismate biosynthesis; chorismate from D-erythrose 4-phosphate and phosphoenolpyruvate: step 6/7.</text>
</comment>
<comment type="subunit">
    <text evidence="1">Monomer.</text>
</comment>
<comment type="subcellular location">
    <subcellularLocation>
        <location evidence="1">Cytoplasm</location>
    </subcellularLocation>
</comment>
<comment type="similarity">
    <text evidence="1">Belongs to the EPSP synthase family.</text>
</comment>
<organism>
    <name type="scientific">Rhizobium etli (strain ATCC 51251 / DSM 11541 / JCM 21823 / NBRC 15573 / CFN 42)</name>
    <dbReference type="NCBI Taxonomy" id="347834"/>
    <lineage>
        <taxon>Bacteria</taxon>
        <taxon>Pseudomonadati</taxon>
        <taxon>Pseudomonadota</taxon>
        <taxon>Alphaproteobacteria</taxon>
        <taxon>Hyphomicrobiales</taxon>
        <taxon>Rhizobiaceae</taxon>
        <taxon>Rhizobium/Agrobacterium group</taxon>
        <taxon>Rhizobium</taxon>
    </lineage>
</organism>
<accession>Q2KBU1</accession>
<gene>
    <name evidence="1" type="primary">aroA</name>
    <name type="ordered locus">RHE_CH00884</name>
</gene>
<sequence length="420" mass="44377">MTRTAKLTIIPPGKPLSGRAMPPGSKSITNRALLLAGLAKGTSRLTGALKSDDTRYMADALRAMGVAIDEPDDTTFVVTGSGRLTPPKAPLFLGNAGTATRFLTAAAALVDGTVIVDGDEHMRKRPIGPLVEAMRKLGIDVSAETGCPPVTVRGTGRFEADRILIDGGLSSQYVSALLMMAAGGDRPVDIELVGEDIGALGYIDLTTAAMKAFGAKVEKTSPVTWRVEPTGYRAADFVIEPDASAATYLWAAEVLSDGRIDLGVPNDAFTQPDAKAYETIAKFPHLPAEIDGSQMQDAVPTIAVLAAFNETPVRFVGIANLRVKECDRIRALSSGLNNIREGLAVEEGDDLIVHSDPALAGQTLPAEIDTFADHRIAMSFALAGLKIGGITILDPDCVGKTFPAYWRTLATLGVTYRDKD</sequence>